<feature type="chain" id="PRO_0000315789" description="Acetoacetyl-CoA synthetase">
    <location>
        <begin position="1"/>
        <end position="673"/>
    </location>
</feature>
<feature type="splice variant" id="VSP_030703" description="In isoform 2." evidence="3">
    <location>
        <begin position="346"/>
        <end position="359"/>
    </location>
</feature>
<feature type="sequence conflict" description="In Ref. 2; AAH50501." evidence="4" ref="2">
    <original>V</original>
    <variation>I</variation>
    <location>
        <position position="164"/>
    </location>
</feature>
<feature type="sequence conflict" description="In Ref. 2; AAH50501." evidence="4" ref="2">
    <original>V</original>
    <variation>M</variation>
    <location>
        <position position="431"/>
    </location>
</feature>
<dbReference type="EC" id="6.2.1.16" evidence="2"/>
<dbReference type="EMBL" id="CR759959">
    <property type="protein sequence ID" value="CAM56650.1"/>
    <property type="molecule type" value="Genomic_DNA"/>
</dbReference>
<dbReference type="EMBL" id="BC050501">
    <property type="protein sequence ID" value="AAH50501.1"/>
    <property type="molecule type" value="mRNA"/>
</dbReference>
<dbReference type="RefSeq" id="NP_957303.1">
    <property type="nucleotide sequence ID" value="NM_201009.1"/>
</dbReference>
<dbReference type="RefSeq" id="XP_005165133.1">
    <molecule id="A3QK15-1"/>
    <property type="nucleotide sequence ID" value="XM_005165076.5"/>
</dbReference>
<dbReference type="SMR" id="A3QK15"/>
<dbReference type="FunCoup" id="A3QK15">
    <property type="interactions" value="404"/>
</dbReference>
<dbReference type="STRING" id="7955.ENSDARP00000002180"/>
<dbReference type="PaxDb" id="7955-ENSDARP00000002180"/>
<dbReference type="PeptideAtlas" id="A3QK15"/>
<dbReference type="Ensembl" id="ENSDART00000010101">
    <molecule id="A3QK15-1"/>
    <property type="protein sequence ID" value="ENSDARP00000002180"/>
    <property type="gene ID" value="ENSDARG00000012468"/>
</dbReference>
<dbReference type="GeneID" id="393984"/>
<dbReference type="KEGG" id="dre:393984"/>
<dbReference type="AGR" id="ZFIN:ZDB-GENE-040426-903"/>
<dbReference type="CTD" id="65985"/>
<dbReference type="ZFIN" id="ZDB-GENE-040426-903">
    <property type="gene designation" value="aacs"/>
</dbReference>
<dbReference type="eggNOG" id="KOG1175">
    <property type="taxonomic scope" value="Eukaryota"/>
</dbReference>
<dbReference type="HOGENOM" id="CLU_000022_3_3_1"/>
<dbReference type="InParanoid" id="A3QK15"/>
<dbReference type="OMA" id="MPNTWQT"/>
<dbReference type="OrthoDB" id="10253869at2759"/>
<dbReference type="PhylomeDB" id="A3QK15"/>
<dbReference type="TreeFam" id="TF354241"/>
<dbReference type="Reactome" id="R-DRE-77111">
    <property type="pathway name" value="Synthesis of Ketone Bodies"/>
</dbReference>
<dbReference type="PRO" id="PR:A3QK15"/>
<dbReference type="Proteomes" id="UP000000437">
    <property type="component" value="Chromosome 5"/>
</dbReference>
<dbReference type="Bgee" id="ENSDARG00000012468">
    <property type="expression patterns" value="Expressed in zone of skin and 30 other cell types or tissues"/>
</dbReference>
<dbReference type="ExpressionAtlas" id="A3QK15">
    <property type="expression patterns" value="baseline and differential"/>
</dbReference>
<dbReference type="GO" id="GO:0005829">
    <property type="term" value="C:cytosol"/>
    <property type="evidence" value="ECO:0007669"/>
    <property type="project" value="UniProtKB-SubCell"/>
</dbReference>
<dbReference type="GO" id="GO:0030729">
    <property type="term" value="F:acetoacetate-CoA ligase activity"/>
    <property type="evidence" value="ECO:0000318"/>
    <property type="project" value="GO_Central"/>
</dbReference>
<dbReference type="GO" id="GO:0005524">
    <property type="term" value="F:ATP binding"/>
    <property type="evidence" value="ECO:0007669"/>
    <property type="project" value="UniProtKB-KW"/>
</dbReference>
<dbReference type="GO" id="GO:0006631">
    <property type="term" value="P:fatty acid metabolic process"/>
    <property type="evidence" value="ECO:0007669"/>
    <property type="project" value="UniProtKB-KW"/>
</dbReference>
<dbReference type="GO" id="GO:0032024">
    <property type="term" value="P:positive regulation of insulin secretion"/>
    <property type="evidence" value="ECO:0000318"/>
    <property type="project" value="GO_Central"/>
</dbReference>
<dbReference type="CDD" id="cd05943">
    <property type="entry name" value="AACS"/>
    <property type="match status" value="1"/>
</dbReference>
<dbReference type="FunFam" id="3.30.300.30:FF:000037">
    <property type="entry name" value="acetoacetyl-CoA synthetase"/>
    <property type="match status" value="1"/>
</dbReference>
<dbReference type="Gene3D" id="3.30.300.30">
    <property type="match status" value="1"/>
</dbReference>
<dbReference type="Gene3D" id="3.40.50.12780">
    <property type="entry name" value="N-terminal domain of ligase-like"/>
    <property type="match status" value="1"/>
</dbReference>
<dbReference type="InterPro" id="IPR005914">
    <property type="entry name" value="Acac_CoA_synth"/>
</dbReference>
<dbReference type="InterPro" id="IPR032387">
    <property type="entry name" value="ACAS_N"/>
</dbReference>
<dbReference type="InterPro" id="IPR045851">
    <property type="entry name" value="AMP-bd_C_sf"/>
</dbReference>
<dbReference type="InterPro" id="IPR020845">
    <property type="entry name" value="AMP-binding_CS"/>
</dbReference>
<dbReference type="InterPro" id="IPR000873">
    <property type="entry name" value="AMP-dep_synth/lig_dom"/>
</dbReference>
<dbReference type="InterPro" id="IPR042099">
    <property type="entry name" value="ANL_N_sf"/>
</dbReference>
<dbReference type="NCBIfam" id="TIGR01217">
    <property type="entry name" value="ac_ac_CoA_syn"/>
    <property type="match status" value="1"/>
</dbReference>
<dbReference type="NCBIfam" id="NF002937">
    <property type="entry name" value="PRK03584.1"/>
    <property type="match status" value="1"/>
</dbReference>
<dbReference type="PANTHER" id="PTHR42921">
    <property type="entry name" value="ACETOACETYL-COA SYNTHETASE"/>
    <property type="match status" value="1"/>
</dbReference>
<dbReference type="PANTHER" id="PTHR42921:SF1">
    <property type="entry name" value="ACETOACETYL-COA SYNTHETASE"/>
    <property type="match status" value="1"/>
</dbReference>
<dbReference type="Pfam" id="PF16177">
    <property type="entry name" value="ACAS_N"/>
    <property type="match status" value="1"/>
</dbReference>
<dbReference type="Pfam" id="PF00501">
    <property type="entry name" value="AMP-binding"/>
    <property type="match status" value="1"/>
</dbReference>
<dbReference type="SUPFAM" id="SSF56801">
    <property type="entry name" value="Acetyl-CoA synthetase-like"/>
    <property type="match status" value="1"/>
</dbReference>
<dbReference type="PROSITE" id="PS00455">
    <property type="entry name" value="AMP_BINDING"/>
    <property type="match status" value="1"/>
</dbReference>
<gene>
    <name type="primary">aacs</name>
    <name type="ORF">si:dkey-215k6.2</name>
    <name type="ORF">zgc:56105</name>
</gene>
<reference key="1">
    <citation type="journal article" date="2013" name="Nature">
        <title>The zebrafish reference genome sequence and its relationship to the human genome.</title>
        <authorList>
            <person name="Howe K."/>
            <person name="Clark M.D."/>
            <person name="Torroja C.F."/>
            <person name="Torrance J."/>
            <person name="Berthelot C."/>
            <person name="Muffato M."/>
            <person name="Collins J.E."/>
            <person name="Humphray S."/>
            <person name="McLaren K."/>
            <person name="Matthews L."/>
            <person name="McLaren S."/>
            <person name="Sealy I."/>
            <person name="Caccamo M."/>
            <person name="Churcher C."/>
            <person name="Scott C."/>
            <person name="Barrett J.C."/>
            <person name="Koch R."/>
            <person name="Rauch G.J."/>
            <person name="White S."/>
            <person name="Chow W."/>
            <person name="Kilian B."/>
            <person name="Quintais L.T."/>
            <person name="Guerra-Assuncao J.A."/>
            <person name="Zhou Y."/>
            <person name="Gu Y."/>
            <person name="Yen J."/>
            <person name="Vogel J.H."/>
            <person name="Eyre T."/>
            <person name="Redmond S."/>
            <person name="Banerjee R."/>
            <person name="Chi J."/>
            <person name="Fu B."/>
            <person name="Langley E."/>
            <person name="Maguire S.F."/>
            <person name="Laird G.K."/>
            <person name="Lloyd D."/>
            <person name="Kenyon E."/>
            <person name="Donaldson S."/>
            <person name="Sehra H."/>
            <person name="Almeida-King J."/>
            <person name="Loveland J."/>
            <person name="Trevanion S."/>
            <person name="Jones M."/>
            <person name="Quail M."/>
            <person name="Willey D."/>
            <person name="Hunt A."/>
            <person name="Burton J."/>
            <person name="Sims S."/>
            <person name="McLay K."/>
            <person name="Plumb B."/>
            <person name="Davis J."/>
            <person name="Clee C."/>
            <person name="Oliver K."/>
            <person name="Clark R."/>
            <person name="Riddle C."/>
            <person name="Elliot D."/>
            <person name="Threadgold G."/>
            <person name="Harden G."/>
            <person name="Ware D."/>
            <person name="Begum S."/>
            <person name="Mortimore B."/>
            <person name="Kerry G."/>
            <person name="Heath P."/>
            <person name="Phillimore B."/>
            <person name="Tracey A."/>
            <person name="Corby N."/>
            <person name="Dunn M."/>
            <person name="Johnson C."/>
            <person name="Wood J."/>
            <person name="Clark S."/>
            <person name="Pelan S."/>
            <person name="Griffiths G."/>
            <person name="Smith M."/>
            <person name="Glithero R."/>
            <person name="Howden P."/>
            <person name="Barker N."/>
            <person name="Lloyd C."/>
            <person name="Stevens C."/>
            <person name="Harley J."/>
            <person name="Holt K."/>
            <person name="Panagiotidis G."/>
            <person name="Lovell J."/>
            <person name="Beasley H."/>
            <person name="Henderson C."/>
            <person name="Gordon D."/>
            <person name="Auger K."/>
            <person name="Wright D."/>
            <person name="Collins J."/>
            <person name="Raisen C."/>
            <person name="Dyer L."/>
            <person name="Leung K."/>
            <person name="Robertson L."/>
            <person name="Ambridge K."/>
            <person name="Leongamornlert D."/>
            <person name="McGuire S."/>
            <person name="Gilderthorp R."/>
            <person name="Griffiths C."/>
            <person name="Manthravadi D."/>
            <person name="Nichol S."/>
            <person name="Barker G."/>
            <person name="Whitehead S."/>
            <person name="Kay M."/>
            <person name="Brown J."/>
            <person name="Murnane C."/>
            <person name="Gray E."/>
            <person name="Humphries M."/>
            <person name="Sycamore N."/>
            <person name="Barker D."/>
            <person name="Saunders D."/>
            <person name="Wallis J."/>
            <person name="Babbage A."/>
            <person name="Hammond S."/>
            <person name="Mashreghi-Mohammadi M."/>
            <person name="Barr L."/>
            <person name="Martin S."/>
            <person name="Wray P."/>
            <person name="Ellington A."/>
            <person name="Matthews N."/>
            <person name="Ellwood M."/>
            <person name="Woodmansey R."/>
            <person name="Clark G."/>
            <person name="Cooper J."/>
            <person name="Tromans A."/>
            <person name="Grafham D."/>
            <person name="Skuce C."/>
            <person name="Pandian R."/>
            <person name="Andrews R."/>
            <person name="Harrison E."/>
            <person name="Kimberley A."/>
            <person name="Garnett J."/>
            <person name="Fosker N."/>
            <person name="Hall R."/>
            <person name="Garner P."/>
            <person name="Kelly D."/>
            <person name="Bird C."/>
            <person name="Palmer S."/>
            <person name="Gehring I."/>
            <person name="Berger A."/>
            <person name="Dooley C.M."/>
            <person name="Ersan-Urun Z."/>
            <person name="Eser C."/>
            <person name="Geiger H."/>
            <person name="Geisler M."/>
            <person name="Karotki L."/>
            <person name="Kirn A."/>
            <person name="Konantz J."/>
            <person name="Konantz M."/>
            <person name="Oberlander M."/>
            <person name="Rudolph-Geiger S."/>
            <person name="Teucke M."/>
            <person name="Lanz C."/>
            <person name="Raddatz G."/>
            <person name="Osoegawa K."/>
            <person name="Zhu B."/>
            <person name="Rapp A."/>
            <person name="Widaa S."/>
            <person name="Langford C."/>
            <person name="Yang F."/>
            <person name="Schuster S.C."/>
            <person name="Carter N.P."/>
            <person name="Harrow J."/>
            <person name="Ning Z."/>
            <person name="Herrero J."/>
            <person name="Searle S.M."/>
            <person name="Enright A."/>
            <person name="Geisler R."/>
            <person name="Plasterk R.H."/>
            <person name="Lee C."/>
            <person name="Westerfield M."/>
            <person name="de Jong P.J."/>
            <person name="Zon L.I."/>
            <person name="Postlethwait J.H."/>
            <person name="Nusslein-Volhard C."/>
            <person name="Hubbard T.J."/>
            <person name="Roest Crollius H."/>
            <person name="Rogers J."/>
            <person name="Stemple D.L."/>
        </authorList>
    </citation>
    <scope>NUCLEOTIDE SEQUENCE [LARGE SCALE GENOMIC DNA]</scope>
    <source>
        <strain>Tuebingen</strain>
    </source>
</reference>
<reference key="2">
    <citation type="submission" date="2003-04" db="EMBL/GenBank/DDBJ databases">
        <authorList>
            <consortium name="NIH - Zebrafish Gene Collection (ZGC) project"/>
        </authorList>
    </citation>
    <scope>NUCLEOTIDE SEQUENCE [LARGE SCALE MRNA] (ISOFORM 2)</scope>
    <source>
        <strain>SJD</strain>
    </source>
</reference>
<proteinExistence type="evidence at transcript level"/>
<sequence length="673" mass="74967">MSKDTEAKSEEIMESKVLWYPDSKRNTQTDRFRTLVNREFGLNLANYNDLYQWSVDSYPEFWAQVWKFCGITCSKMYEEVVDVSKRISDVPEWFKGSRLNYAENLLKHKDQDKVALYAASEAKEEIVKVTFGELRRDVALFAAAMRKMGIKIGDRVVGYLPNGVHAVEAMLAAASIGAIWSSTSPDFGVNGVLDRISQIQPKLIFSVAAVVYNGKQHDHMEKLQNVVKGLPDLKKVVVIPYVRSRQETDLSKIPNSVFLEDFLATGKEGDQDPQLEFEQLPFSHPLFIMYSSGTTGAPKCMVHSAGGTLIQHLKEHILHGNMTFNDVIIYYTTTGWMMWNWLISSLAVGASVVLYDGSPLVPSANVLWDLVDRLGITIFGTGAKWLAVLEERDQKPASTHSLQTLHTLLSTGSPLKPQSYEYVYSCIKNNVLLGSISGGTDIISCFMGQNMTVPVYRGEIQARNLGMAVESWSCEGKPVWGESGELVCLKPIPCQPTHFWNDENGSKYHKAYFSTFPGVWAHGDYCKINPKTGGVVMLGRSDGTLNPNGVRFGSSEIYNIVEAFDEVSDSLCVPQYNSDGEERVILFLKMGPNKSFSQELVGKIRGAIRVALSARHVPALILETKDIPYTISGKKVEVAVKQVIAGKEVTQRGAFSNPDSLDLYKNLPELQNF</sequence>
<protein>
    <recommendedName>
        <fullName>Acetoacetyl-CoA synthetase</fullName>
        <ecNumber evidence="2">6.2.1.16</ecNumber>
    </recommendedName>
</protein>
<keyword id="KW-0025">Alternative splicing</keyword>
<keyword id="KW-0067">ATP-binding</keyword>
<keyword id="KW-0963">Cytoplasm</keyword>
<keyword id="KW-0276">Fatty acid metabolism</keyword>
<keyword id="KW-0436">Ligase</keyword>
<keyword id="KW-0443">Lipid metabolism</keyword>
<keyword id="KW-0547">Nucleotide-binding</keyword>
<keyword id="KW-1185">Reference proteome</keyword>
<accession>A3QK15</accession>
<accession>Q7ZU87</accession>
<evidence type="ECO:0000250" key="1">
    <source>
        <dbReference type="UniProtKB" id="Q9D2R0"/>
    </source>
</evidence>
<evidence type="ECO:0000250" key="2">
    <source>
        <dbReference type="UniProtKB" id="Q9JMI1"/>
    </source>
</evidence>
<evidence type="ECO:0000303" key="3">
    <source ref="2"/>
</evidence>
<evidence type="ECO:0000305" key="4"/>
<name>AACS_DANRE</name>
<comment type="function">
    <text evidence="1 2">Converts acetoacetate to acetoacetyl-CoA in the cytosol (By similarity). Ketone body-utilizing enzyme, responsible for the synthesis of cholesterol and fatty acids (By similarity).</text>
</comment>
<comment type="catalytic activity">
    <reaction evidence="2">
        <text>acetoacetate + ATP + CoA = acetoacetyl-CoA + AMP + diphosphate</text>
        <dbReference type="Rhea" id="RHEA:16117"/>
        <dbReference type="ChEBI" id="CHEBI:13705"/>
        <dbReference type="ChEBI" id="CHEBI:30616"/>
        <dbReference type="ChEBI" id="CHEBI:33019"/>
        <dbReference type="ChEBI" id="CHEBI:57286"/>
        <dbReference type="ChEBI" id="CHEBI:57287"/>
        <dbReference type="ChEBI" id="CHEBI:456215"/>
        <dbReference type="EC" id="6.2.1.16"/>
    </reaction>
    <physiologicalReaction direction="left-to-right" evidence="2">
        <dbReference type="Rhea" id="RHEA:16118"/>
    </physiologicalReaction>
</comment>
<comment type="subcellular location">
    <subcellularLocation>
        <location evidence="2">Cytoplasm</location>
        <location evidence="2">Cytosol</location>
    </subcellularLocation>
</comment>
<comment type="alternative products">
    <event type="alternative splicing"/>
    <isoform>
        <id>A3QK15-1</id>
        <name>1</name>
        <sequence type="displayed"/>
    </isoform>
    <isoform>
        <id>A3QK15-2</id>
        <name>2</name>
        <sequence type="described" ref="VSP_030703"/>
    </isoform>
</comment>
<comment type="similarity">
    <text evidence="4">Belongs to the ATP-dependent AMP-binding enzyme family.</text>
</comment>
<organism>
    <name type="scientific">Danio rerio</name>
    <name type="common">Zebrafish</name>
    <name type="synonym">Brachydanio rerio</name>
    <dbReference type="NCBI Taxonomy" id="7955"/>
    <lineage>
        <taxon>Eukaryota</taxon>
        <taxon>Metazoa</taxon>
        <taxon>Chordata</taxon>
        <taxon>Craniata</taxon>
        <taxon>Vertebrata</taxon>
        <taxon>Euteleostomi</taxon>
        <taxon>Actinopterygii</taxon>
        <taxon>Neopterygii</taxon>
        <taxon>Teleostei</taxon>
        <taxon>Ostariophysi</taxon>
        <taxon>Cypriniformes</taxon>
        <taxon>Danionidae</taxon>
        <taxon>Danioninae</taxon>
        <taxon>Danio</taxon>
    </lineage>
</organism>